<protein>
    <recommendedName>
        <fullName evidence="1">Enolase</fullName>
        <ecNumber evidence="1">4.2.1.11</ecNumber>
    </recommendedName>
    <alternativeName>
        <fullName evidence="1">2-phospho-D-glycerate hydro-lyase</fullName>
    </alternativeName>
    <alternativeName>
        <fullName evidence="1">2-phosphoglycerate dehydratase</fullName>
    </alternativeName>
</protein>
<proteinExistence type="inferred from homology"/>
<accession>A7HXW7</accession>
<comment type="function">
    <text evidence="1">Catalyzes the reversible conversion of 2-phosphoglycerate (2-PG) into phosphoenolpyruvate (PEP). It is essential for the degradation of carbohydrates via glycolysis.</text>
</comment>
<comment type="catalytic activity">
    <reaction evidence="1">
        <text>(2R)-2-phosphoglycerate = phosphoenolpyruvate + H2O</text>
        <dbReference type="Rhea" id="RHEA:10164"/>
        <dbReference type="ChEBI" id="CHEBI:15377"/>
        <dbReference type="ChEBI" id="CHEBI:58289"/>
        <dbReference type="ChEBI" id="CHEBI:58702"/>
        <dbReference type="EC" id="4.2.1.11"/>
    </reaction>
</comment>
<comment type="cofactor">
    <cofactor evidence="1">
        <name>Mg(2+)</name>
        <dbReference type="ChEBI" id="CHEBI:18420"/>
    </cofactor>
    <text evidence="1">Binds a second Mg(2+) ion via substrate during catalysis.</text>
</comment>
<comment type="pathway">
    <text evidence="1">Carbohydrate degradation; glycolysis; pyruvate from D-glyceraldehyde 3-phosphate: step 4/5.</text>
</comment>
<comment type="subcellular location">
    <subcellularLocation>
        <location evidence="1">Cytoplasm</location>
    </subcellularLocation>
    <subcellularLocation>
        <location evidence="1">Secreted</location>
    </subcellularLocation>
    <subcellularLocation>
        <location evidence="1">Cell surface</location>
    </subcellularLocation>
    <text evidence="1">Fractions of enolase are present in both the cytoplasm and on the cell surface.</text>
</comment>
<comment type="similarity">
    <text evidence="1">Belongs to the enolase family.</text>
</comment>
<evidence type="ECO:0000255" key="1">
    <source>
        <dbReference type="HAMAP-Rule" id="MF_00318"/>
    </source>
</evidence>
<name>ENO_PARL1</name>
<reference key="1">
    <citation type="journal article" date="2011" name="Stand. Genomic Sci.">
        <title>Complete genome sequence of Parvibaculum lavamentivorans type strain (DS-1(T)).</title>
        <authorList>
            <person name="Schleheck D."/>
            <person name="Weiss M."/>
            <person name="Pitluck S."/>
            <person name="Bruce D."/>
            <person name="Land M.L."/>
            <person name="Han S."/>
            <person name="Saunders E."/>
            <person name="Tapia R."/>
            <person name="Detter C."/>
            <person name="Brettin T."/>
            <person name="Han J."/>
            <person name="Woyke T."/>
            <person name="Goodwin L."/>
            <person name="Pennacchio L."/>
            <person name="Nolan M."/>
            <person name="Cook A.M."/>
            <person name="Kjelleberg S."/>
            <person name="Thomas T."/>
        </authorList>
    </citation>
    <scope>NUCLEOTIDE SEQUENCE [LARGE SCALE GENOMIC DNA]</scope>
    <source>
        <strain>DS-1 / DSM 13023 / NCIMB 13966</strain>
    </source>
</reference>
<dbReference type="EC" id="4.2.1.11" evidence="1"/>
<dbReference type="EMBL" id="CP000774">
    <property type="protein sequence ID" value="ABS64750.1"/>
    <property type="molecule type" value="Genomic_DNA"/>
</dbReference>
<dbReference type="RefSeq" id="WP_012112072.1">
    <property type="nucleotide sequence ID" value="NC_009719.1"/>
</dbReference>
<dbReference type="SMR" id="A7HXW7"/>
<dbReference type="STRING" id="402881.Plav_3143"/>
<dbReference type="KEGG" id="pla:Plav_3143"/>
<dbReference type="eggNOG" id="COG0148">
    <property type="taxonomic scope" value="Bacteria"/>
</dbReference>
<dbReference type="HOGENOM" id="CLU_031223_2_1_5"/>
<dbReference type="OrthoDB" id="9804716at2"/>
<dbReference type="UniPathway" id="UPA00109">
    <property type="reaction ID" value="UER00187"/>
</dbReference>
<dbReference type="Proteomes" id="UP000006377">
    <property type="component" value="Chromosome"/>
</dbReference>
<dbReference type="GO" id="GO:0009986">
    <property type="term" value="C:cell surface"/>
    <property type="evidence" value="ECO:0007669"/>
    <property type="project" value="UniProtKB-SubCell"/>
</dbReference>
<dbReference type="GO" id="GO:0005576">
    <property type="term" value="C:extracellular region"/>
    <property type="evidence" value="ECO:0007669"/>
    <property type="project" value="UniProtKB-SubCell"/>
</dbReference>
<dbReference type="GO" id="GO:0000015">
    <property type="term" value="C:phosphopyruvate hydratase complex"/>
    <property type="evidence" value="ECO:0007669"/>
    <property type="project" value="InterPro"/>
</dbReference>
<dbReference type="GO" id="GO:0000287">
    <property type="term" value="F:magnesium ion binding"/>
    <property type="evidence" value="ECO:0007669"/>
    <property type="project" value="UniProtKB-UniRule"/>
</dbReference>
<dbReference type="GO" id="GO:0004634">
    <property type="term" value="F:phosphopyruvate hydratase activity"/>
    <property type="evidence" value="ECO:0007669"/>
    <property type="project" value="UniProtKB-UniRule"/>
</dbReference>
<dbReference type="GO" id="GO:0006096">
    <property type="term" value="P:glycolytic process"/>
    <property type="evidence" value="ECO:0007669"/>
    <property type="project" value="UniProtKB-UniRule"/>
</dbReference>
<dbReference type="CDD" id="cd03313">
    <property type="entry name" value="enolase"/>
    <property type="match status" value="1"/>
</dbReference>
<dbReference type="FunFam" id="3.20.20.120:FF:000001">
    <property type="entry name" value="Enolase"/>
    <property type="match status" value="1"/>
</dbReference>
<dbReference type="FunFam" id="3.30.390.10:FF:000001">
    <property type="entry name" value="Enolase"/>
    <property type="match status" value="1"/>
</dbReference>
<dbReference type="Gene3D" id="3.20.20.120">
    <property type="entry name" value="Enolase-like C-terminal domain"/>
    <property type="match status" value="1"/>
</dbReference>
<dbReference type="Gene3D" id="3.30.390.10">
    <property type="entry name" value="Enolase-like, N-terminal domain"/>
    <property type="match status" value="1"/>
</dbReference>
<dbReference type="HAMAP" id="MF_00318">
    <property type="entry name" value="Enolase"/>
    <property type="match status" value="1"/>
</dbReference>
<dbReference type="InterPro" id="IPR000941">
    <property type="entry name" value="Enolase"/>
</dbReference>
<dbReference type="InterPro" id="IPR036849">
    <property type="entry name" value="Enolase-like_C_sf"/>
</dbReference>
<dbReference type="InterPro" id="IPR029017">
    <property type="entry name" value="Enolase-like_N"/>
</dbReference>
<dbReference type="InterPro" id="IPR020810">
    <property type="entry name" value="Enolase_C"/>
</dbReference>
<dbReference type="InterPro" id="IPR020809">
    <property type="entry name" value="Enolase_CS"/>
</dbReference>
<dbReference type="InterPro" id="IPR020811">
    <property type="entry name" value="Enolase_N"/>
</dbReference>
<dbReference type="NCBIfam" id="TIGR01060">
    <property type="entry name" value="eno"/>
    <property type="match status" value="1"/>
</dbReference>
<dbReference type="PANTHER" id="PTHR11902">
    <property type="entry name" value="ENOLASE"/>
    <property type="match status" value="1"/>
</dbReference>
<dbReference type="PANTHER" id="PTHR11902:SF1">
    <property type="entry name" value="ENOLASE"/>
    <property type="match status" value="1"/>
</dbReference>
<dbReference type="Pfam" id="PF00113">
    <property type="entry name" value="Enolase_C"/>
    <property type="match status" value="1"/>
</dbReference>
<dbReference type="Pfam" id="PF03952">
    <property type="entry name" value="Enolase_N"/>
    <property type="match status" value="1"/>
</dbReference>
<dbReference type="PIRSF" id="PIRSF001400">
    <property type="entry name" value="Enolase"/>
    <property type="match status" value="1"/>
</dbReference>
<dbReference type="PRINTS" id="PR00148">
    <property type="entry name" value="ENOLASE"/>
</dbReference>
<dbReference type="SFLD" id="SFLDS00001">
    <property type="entry name" value="Enolase"/>
    <property type="match status" value="1"/>
</dbReference>
<dbReference type="SFLD" id="SFLDF00002">
    <property type="entry name" value="enolase"/>
    <property type="match status" value="1"/>
</dbReference>
<dbReference type="SMART" id="SM01192">
    <property type="entry name" value="Enolase_C"/>
    <property type="match status" value="1"/>
</dbReference>
<dbReference type="SMART" id="SM01193">
    <property type="entry name" value="Enolase_N"/>
    <property type="match status" value="1"/>
</dbReference>
<dbReference type="SUPFAM" id="SSF51604">
    <property type="entry name" value="Enolase C-terminal domain-like"/>
    <property type="match status" value="1"/>
</dbReference>
<dbReference type="SUPFAM" id="SSF54826">
    <property type="entry name" value="Enolase N-terminal domain-like"/>
    <property type="match status" value="1"/>
</dbReference>
<dbReference type="PROSITE" id="PS00164">
    <property type="entry name" value="ENOLASE"/>
    <property type="match status" value="1"/>
</dbReference>
<organism>
    <name type="scientific">Parvibaculum lavamentivorans (strain DS-1 / DSM 13023 / NCIMB 13966)</name>
    <dbReference type="NCBI Taxonomy" id="402881"/>
    <lineage>
        <taxon>Bacteria</taxon>
        <taxon>Pseudomonadati</taxon>
        <taxon>Pseudomonadota</taxon>
        <taxon>Alphaproteobacteria</taxon>
        <taxon>Hyphomicrobiales</taxon>
        <taxon>Parvibaculaceae</taxon>
        <taxon>Parvibaculum</taxon>
    </lineage>
</organism>
<gene>
    <name evidence="1" type="primary">eno</name>
    <name type="ordered locus">Plav_3143</name>
</gene>
<keyword id="KW-0963">Cytoplasm</keyword>
<keyword id="KW-0324">Glycolysis</keyword>
<keyword id="KW-0456">Lyase</keyword>
<keyword id="KW-0460">Magnesium</keyword>
<keyword id="KW-0479">Metal-binding</keyword>
<keyword id="KW-1185">Reference proteome</keyword>
<keyword id="KW-0964">Secreted</keyword>
<feature type="chain" id="PRO_1000072010" description="Enolase">
    <location>
        <begin position="1"/>
        <end position="424"/>
    </location>
</feature>
<feature type="active site" description="Proton donor" evidence="1">
    <location>
        <position position="204"/>
    </location>
</feature>
<feature type="active site" description="Proton acceptor" evidence="1">
    <location>
        <position position="336"/>
    </location>
</feature>
<feature type="binding site" evidence="1">
    <location>
        <position position="162"/>
    </location>
    <ligand>
        <name>(2R)-2-phosphoglycerate</name>
        <dbReference type="ChEBI" id="CHEBI:58289"/>
    </ligand>
</feature>
<feature type="binding site" evidence="1">
    <location>
        <position position="241"/>
    </location>
    <ligand>
        <name>Mg(2+)</name>
        <dbReference type="ChEBI" id="CHEBI:18420"/>
    </ligand>
</feature>
<feature type="binding site" evidence="1">
    <location>
        <position position="284"/>
    </location>
    <ligand>
        <name>Mg(2+)</name>
        <dbReference type="ChEBI" id="CHEBI:18420"/>
    </ligand>
</feature>
<feature type="binding site" evidence="1">
    <location>
        <position position="311"/>
    </location>
    <ligand>
        <name>Mg(2+)</name>
        <dbReference type="ChEBI" id="CHEBI:18420"/>
    </ligand>
</feature>
<feature type="binding site" evidence="1">
    <location>
        <position position="336"/>
    </location>
    <ligand>
        <name>(2R)-2-phosphoglycerate</name>
        <dbReference type="ChEBI" id="CHEBI:58289"/>
    </ligand>
</feature>
<feature type="binding site" evidence="1">
    <location>
        <position position="365"/>
    </location>
    <ligand>
        <name>(2R)-2-phosphoglycerate</name>
        <dbReference type="ChEBI" id="CHEBI:58289"/>
    </ligand>
</feature>
<feature type="binding site" evidence="1">
    <location>
        <position position="366"/>
    </location>
    <ligand>
        <name>(2R)-2-phosphoglycerate</name>
        <dbReference type="ChEBI" id="CHEBI:58289"/>
    </ligand>
</feature>
<feature type="binding site" evidence="1">
    <location>
        <position position="387"/>
    </location>
    <ligand>
        <name>(2R)-2-phosphoglycerate</name>
        <dbReference type="ChEBI" id="CHEBI:58289"/>
    </ligand>
</feature>
<sequence>MAAIIDIIGREILDSRGNPTVEVDVLLEDGSLGRAAVPSGASTGAHEAVELRDGGSRYKGKGVLNAIAAVNGDIFDAIGGMDASEQIQIDRTMIALDGTSNKSNLGANAILGVSLAIAKAQAASLGQPLFRYIGGPAARVLPVPMMNIVNGGEHADNPIDIQEFMIMPVAAGSLADAVRMGSEVFHTLKAELKSAGHNTNVGDEGGFAPNLASTEEAIGFIMKAIEKAGYKPGDDIYLALDAASTEFFKNGVYNLQGEGKKLDAGGMVDYWADLVGKYPIISIEDGMAEDDWEGWKALTDRIGSKVQLVGDDLFVTNKRRLADGIAKGTANSILVKVNQIGSLTETLESVEMAHKASYTAVMSHRSGETEDATIADLAVATNCGQIKTGSLARSDRLAKYNQLIRIEEALGPSGEYAGKSVLKG</sequence>